<feature type="transit peptide" description="Mitochondrion" evidence="1">
    <location>
        <begin position="1"/>
        <end status="unknown"/>
    </location>
</feature>
<feature type="chain" id="PRO_0000020016" description="NADH dehydrogenase [ubiquinone] iron-sulfur protein 8-A, mitochondrial">
    <location>
        <begin status="unknown"/>
        <end position="222"/>
    </location>
</feature>
<feature type="domain" description="4Fe-4S ferredoxin-type 1">
    <location>
        <begin position="114"/>
        <end position="143"/>
    </location>
</feature>
<feature type="domain" description="4Fe-4S ferredoxin-type 2">
    <location>
        <begin position="153"/>
        <end position="182"/>
    </location>
</feature>
<feature type="binding site" evidence="1">
    <location>
        <position position="123"/>
    </location>
    <ligand>
        <name>[4Fe-4S] cluster</name>
        <dbReference type="ChEBI" id="CHEBI:49883"/>
        <label>1</label>
    </ligand>
</feature>
<feature type="binding site" evidence="1">
    <location>
        <position position="126"/>
    </location>
    <ligand>
        <name>[4Fe-4S] cluster</name>
        <dbReference type="ChEBI" id="CHEBI:49883"/>
        <label>1</label>
    </ligand>
</feature>
<feature type="binding site" evidence="1">
    <location>
        <position position="129"/>
    </location>
    <ligand>
        <name>[4Fe-4S] cluster</name>
        <dbReference type="ChEBI" id="CHEBI:49883"/>
        <label>1</label>
    </ligand>
</feature>
<feature type="binding site" evidence="1">
    <location>
        <position position="133"/>
    </location>
    <ligand>
        <name>[4Fe-4S] cluster</name>
        <dbReference type="ChEBI" id="CHEBI:49883"/>
        <label>2</label>
    </ligand>
</feature>
<feature type="binding site" evidence="1">
    <location>
        <position position="162"/>
    </location>
    <ligand>
        <name>[4Fe-4S] cluster</name>
        <dbReference type="ChEBI" id="CHEBI:49883"/>
        <label>2</label>
    </ligand>
</feature>
<feature type="binding site" evidence="1">
    <location>
        <position position="165"/>
    </location>
    <ligand>
        <name>[4Fe-4S] cluster</name>
        <dbReference type="ChEBI" id="CHEBI:49883"/>
        <label>2</label>
    </ligand>
</feature>
<feature type="binding site" evidence="1">
    <location>
        <position position="168"/>
    </location>
    <ligand>
        <name>[4Fe-4S] cluster</name>
        <dbReference type="ChEBI" id="CHEBI:49883"/>
        <label>2</label>
    </ligand>
</feature>
<feature type="binding site" evidence="1">
    <location>
        <position position="172"/>
    </location>
    <ligand>
        <name>[4Fe-4S] cluster</name>
        <dbReference type="ChEBI" id="CHEBI:49883"/>
        <label>1</label>
    </ligand>
</feature>
<feature type="helix" evidence="4">
    <location>
        <begin position="60"/>
        <end position="72"/>
    </location>
</feature>
<feature type="helix" evidence="4">
    <location>
        <begin position="74"/>
        <end position="88"/>
    </location>
</feature>
<feature type="turn" evidence="4">
    <location>
        <begin position="96"/>
        <end position="98"/>
    </location>
</feature>
<feature type="strand" evidence="4">
    <location>
        <begin position="110"/>
        <end position="113"/>
    </location>
</feature>
<feature type="helix" evidence="4">
    <location>
        <begin position="128"/>
        <end position="132"/>
    </location>
</feature>
<feature type="strand" evidence="4">
    <location>
        <begin position="138"/>
        <end position="141"/>
    </location>
</feature>
<feature type="strand" evidence="4">
    <location>
        <begin position="153"/>
        <end position="158"/>
    </location>
</feature>
<feature type="turn" evidence="4">
    <location>
        <begin position="159"/>
        <end position="161"/>
    </location>
</feature>
<feature type="helix" evidence="4">
    <location>
        <begin position="167"/>
        <end position="171"/>
    </location>
</feature>
<feature type="strand" evidence="4">
    <location>
        <begin position="177"/>
        <end position="179"/>
    </location>
</feature>
<feature type="strand" evidence="4">
    <location>
        <begin position="187"/>
        <end position="190"/>
    </location>
</feature>
<feature type="helix" evidence="4">
    <location>
        <begin position="191"/>
        <end position="193"/>
    </location>
</feature>
<feature type="helix" evidence="4">
    <location>
        <begin position="197"/>
        <end position="218"/>
    </location>
</feature>
<feature type="turn" evidence="4">
    <location>
        <begin position="219"/>
        <end position="221"/>
    </location>
</feature>
<dbReference type="EC" id="7.1.1.2"/>
<dbReference type="EMBL" id="X84318">
    <property type="protein sequence ID" value="CAA59061.1"/>
    <property type="molecule type" value="mRNA"/>
</dbReference>
<dbReference type="EMBL" id="AC002986">
    <property type="protein sequence ID" value="AAC17054.1"/>
    <property type="molecule type" value="Genomic_DNA"/>
</dbReference>
<dbReference type="EMBL" id="CP002684">
    <property type="protein sequence ID" value="AEE36193.1"/>
    <property type="molecule type" value="Genomic_DNA"/>
</dbReference>
<dbReference type="EMBL" id="AY048241">
    <property type="protein sequence ID" value="AAK82503.1"/>
    <property type="molecule type" value="mRNA"/>
</dbReference>
<dbReference type="EMBL" id="AY072622">
    <property type="protein sequence ID" value="AAL62013.1"/>
    <property type="molecule type" value="mRNA"/>
</dbReference>
<dbReference type="EMBL" id="AK226368">
    <property type="protein sequence ID" value="BAE98516.1"/>
    <property type="molecule type" value="mRNA"/>
</dbReference>
<dbReference type="EMBL" id="AY088308">
    <property type="protein sequence ID" value="AAM65847.1"/>
    <property type="molecule type" value="mRNA"/>
</dbReference>
<dbReference type="PIR" id="S52380">
    <property type="entry name" value="S52380"/>
</dbReference>
<dbReference type="RefSeq" id="NP_178022.1">
    <property type="nucleotide sequence ID" value="NM_106551.4"/>
</dbReference>
<dbReference type="PDB" id="7AQR">
    <property type="method" value="EM"/>
    <property type="resolution" value="2.91 A"/>
    <property type="chains" value="I=1-222"/>
</dbReference>
<dbReference type="PDB" id="7AR7">
    <property type="method" value="EM"/>
    <property type="resolution" value="3.72 A"/>
    <property type="chains" value="I=54-222"/>
</dbReference>
<dbReference type="PDB" id="7AR8">
    <property type="method" value="EM"/>
    <property type="resolution" value="3.53 A"/>
    <property type="chains" value="I=1-222"/>
</dbReference>
<dbReference type="PDB" id="7ARB">
    <property type="method" value="EM"/>
    <property type="resolution" value="3.41 A"/>
    <property type="chains" value="I=1-222"/>
</dbReference>
<dbReference type="PDB" id="8BED">
    <property type="method" value="EM"/>
    <property type="resolution" value="2.03 A"/>
    <property type="chains" value="I=1-222"/>
</dbReference>
<dbReference type="PDB" id="8BEE">
    <property type="method" value="EM"/>
    <property type="resolution" value="2.04 A"/>
    <property type="chains" value="I=1-222"/>
</dbReference>
<dbReference type="PDB" id="8BPX">
    <property type="method" value="EM"/>
    <property type="resolution" value="2.09 A"/>
    <property type="chains" value="I=1-222"/>
</dbReference>
<dbReference type="PDB" id="8BQ5">
    <property type="method" value="EM"/>
    <property type="resolution" value="2.73 A"/>
    <property type="chains" value="I=1-222"/>
</dbReference>
<dbReference type="PDB" id="8BQ6">
    <property type="method" value="EM"/>
    <property type="resolution" value="2.80 A"/>
    <property type="chains" value="I=1-222"/>
</dbReference>
<dbReference type="PDBsum" id="7AQR"/>
<dbReference type="PDBsum" id="7AR7"/>
<dbReference type="PDBsum" id="7AR8"/>
<dbReference type="PDBsum" id="7ARB"/>
<dbReference type="PDBsum" id="8BED"/>
<dbReference type="PDBsum" id="8BEE"/>
<dbReference type="PDBsum" id="8BPX"/>
<dbReference type="PDBsum" id="8BQ5"/>
<dbReference type="PDBsum" id="8BQ6"/>
<dbReference type="EMDB" id="EMD-11873"/>
<dbReference type="EMDB" id="EMD-11875"/>
<dbReference type="EMDB" id="EMD-11876"/>
<dbReference type="EMDB" id="EMD-11878"/>
<dbReference type="EMDB" id="EMD-15998"/>
<dbReference type="EMDB" id="EMD-15999"/>
<dbReference type="EMDB" id="EMD-16168"/>
<dbReference type="EMDB" id="EMD-16171"/>
<dbReference type="EMDB" id="EMD-16172"/>
<dbReference type="SMR" id="Q42599"/>
<dbReference type="BioGRID" id="29461">
    <property type="interactions" value="29"/>
</dbReference>
<dbReference type="FunCoup" id="Q42599">
    <property type="interactions" value="3738"/>
</dbReference>
<dbReference type="IntAct" id="Q42599">
    <property type="interactions" value="2"/>
</dbReference>
<dbReference type="STRING" id="3702.Q42599"/>
<dbReference type="SwissPalm" id="Q42599"/>
<dbReference type="PaxDb" id="3702-AT1G79010.1"/>
<dbReference type="ProteomicsDB" id="236819"/>
<dbReference type="EnsemblPlants" id="AT1G79010.1">
    <property type="protein sequence ID" value="AT1G79010.1"/>
    <property type="gene ID" value="AT1G79010"/>
</dbReference>
<dbReference type="GeneID" id="844242"/>
<dbReference type="Gramene" id="AT1G79010.1">
    <property type="protein sequence ID" value="AT1G79010.1"/>
    <property type="gene ID" value="AT1G79010"/>
</dbReference>
<dbReference type="KEGG" id="ath:AT1G79010"/>
<dbReference type="Araport" id="AT1G79010"/>
<dbReference type="TAIR" id="AT1G79010"/>
<dbReference type="eggNOG" id="KOG3256">
    <property type="taxonomic scope" value="Eukaryota"/>
</dbReference>
<dbReference type="HOGENOM" id="CLU_067218_5_0_1"/>
<dbReference type="InParanoid" id="Q42599"/>
<dbReference type="OMA" id="WYPDFFR"/>
<dbReference type="PhylomeDB" id="Q42599"/>
<dbReference type="BioCyc" id="ARA:AT1G79010-MONOMER"/>
<dbReference type="BioCyc" id="MetaCyc:AT1G79010-MONOMER"/>
<dbReference type="PRO" id="PR:Q42599"/>
<dbReference type="Proteomes" id="UP000006548">
    <property type="component" value="Chromosome 1"/>
</dbReference>
<dbReference type="ExpressionAtlas" id="Q42599">
    <property type="expression patterns" value="baseline and differential"/>
</dbReference>
<dbReference type="GO" id="GO:0016020">
    <property type="term" value="C:membrane"/>
    <property type="evidence" value="ECO:0007669"/>
    <property type="project" value="InterPro"/>
</dbReference>
<dbReference type="GO" id="GO:0005739">
    <property type="term" value="C:mitochondrion"/>
    <property type="evidence" value="ECO:0000314"/>
    <property type="project" value="TAIR"/>
</dbReference>
<dbReference type="GO" id="GO:0051539">
    <property type="term" value="F:4 iron, 4 sulfur cluster binding"/>
    <property type="evidence" value="ECO:0007669"/>
    <property type="project" value="UniProtKB-KW"/>
</dbReference>
<dbReference type="GO" id="GO:0046872">
    <property type="term" value="F:metal ion binding"/>
    <property type="evidence" value="ECO:0000314"/>
    <property type="project" value="TAIR"/>
</dbReference>
<dbReference type="GO" id="GO:0008137">
    <property type="term" value="F:NADH dehydrogenase (ubiquinone) activity"/>
    <property type="evidence" value="ECO:0007669"/>
    <property type="project" value="UniProtKB-EC"/>
</dbReference>
<dbReference type="FunFam" id="3.30.70.3270:FF:000001">
    <property type="entry name" value="NADH-quinone oxidoreductase subunit I 1"/>
    <property type="match status" value="1"/>
</dbReference>
<dbReference type="Gene3D" id="3.30.70.3270">
    <property type="match status" value="1"/>
</dbReference>
<dbReference type="HAMAP" id="MF_01351">
    <property type="entry name" value="NDH1_NuoI"/>
    <property type="match status" value="1"/>
</dbReference>
<dbReference type="InterPro" id="IPR017896">
    <property type="entry name" value="4Fe4S_Fe-S-bd"/>
</dbReference>
<dbReference type="InterPro" id="IPR017900">
    <property type="entry name" value="4Fe4S_Fe_S_CS"/>
</dbReference>
<dbReference type="InterPro" id="IPR010226">
    <property type="entry name" value="NADH_quinone_OxRdtase_chainI"/>
</dbReference>
<dbReference type="NCBIfam" id="TIGR01971">
    <property type="entry name" value="NuoI"/>
    <property type="match status" value="1"/>
</dbReference>
<dbReference type="NCBIfam" id="NF004538">
    <property type="entry name" value="PRK05888.1-4"/>
    <property type="match status" value="1"/>
</dbReference>
<dbReference type="NCBIfam" id="NF004539">
    <property type="entry name" value="PRK05888.1-5"/>
    <property type="match status" value="1"/>
</dbReference>
<dbReference type="PANTHER" id="PTHR10849:SF20">
    <property type="entry name" value="NADH DEHYDROGENASE [UBIQUINONE] IRON-SULFUR PROTEIN 8, MITOCHONDRIAL"/>
    <property type="match status" value="1"/>
</dbReference>
<dbReference type="PANTHER" id="PTHR10849">
    <property type="entry name" value="NADH DEHYDROGENASE UBIQUINONE IRON-SULFUR PROTEIN 8, MITOCHONDRIAL"/>
    <property type="match status" value="1"/>
</dbReference>
<dbReference type="Pfam" id="PF12838">
    <property type="entry name" value="Fer4_7"/>
    <property type="match status" value="1"/>
</dbReference>
<dbReference type="SUPFAM" id="SSF54862">
    <property type="entry name" value="4Fe-4S ferredoxins"/>
    <property type="match status" value="1"/>
</dbReference>
<dbReference type="PROSITE" id="PS00198">
    <property type="entry name" value="4FE4S_FER_1"/>
    <property type="match status" value="2"/>
</dbReference>
<dbReference type="PROSITE" id="PS51379">
    <property type="entry name" value="4FE4S_FER_2"/>
    <property type="match status" value="2"/>
</dbReference>
<proteinExistence type="evidence at protein level"/>
<organism>
    <name type="scientific">Arabidopsis thaliana</name>
    <name type="common">Mouse-ear cress</name>
    <dbReference type="NCBI Taxonomy" id="3702"/>
    <lineage>
        <taxon>Eukaryota</taxon>
        <taxon>Viridiplantae</taxon>
        <taxon>Streptophyta</taxon>
        <taxon>Embryophyta</taxon>
        <taxon>Tracheophyta</taxon>
        <taxon>Spermatophyta</taxon>
        <taxon>Magnoliopsida</taxon>
        <taxon>eudicotyledons</taxon>
        <taxon>Gunneridae</taxon>
        <taxon>Pentapetalae</taxon>
        <taxon>rosids</taxon>
        <taxon>malvids</taxon>
        <taxon>Brassicales</taxon>
        <taxon>Brassicaceae</taxon>
        <taxon>Camelineae</taxon>
        <taxon>Arabidopsis</taxon>
    </lineage>
</organism>
<comment type="function">
    <text evidence="1">Core subunit of the mitochondrial membrane respiratory chain NADH dehydrogenase (Complex I) that is believed to belong to the minimal assembly required for catalysis. Complex I functions in the transfer of electrons from NADH to the respiratory chain. The immediate electron acceptor for the enzyme is believed to be ubiquinone (By similarity). May donate electrons to ubiquinone.</text>
</comment>
<comment type="catalytic activity">
    <reaction>
        <text>a ubiquinone + NADH + 5 H(+)(in) = a ubiquinol + NAD(+) + 4 H(+)(out)</text>
        <dbReference type="Rhea" id="RHEA:29091"/>
        <dbReference type="Rhea" id="RHEA-COMP:9565"/>
        <dbReference type="Rhea" id="RHEA-COMP:9566"/>
        <dbReference type="ChEBI" id="CHEBI:15378"/>
        <dbReference type="ChEBI" id="CHEBI:16389"/>
        <dbReference type="ChEBI" id="CHEBI:17976"/>
        <dbReference type="ChEBI" id="CHEBI:57540"/>
        <dbReference type="ChEBI" id="CHEBI:57945"/>
        <dbReference type="EC" id="7.1.1.2"/>
    </reaction>
</comment>
<comment type="cofactor">
    <cofactor evidence="1">
        <name>[4Fe-4S] cluster</name>
        <dbReference type="ChEBI" id="CHEBI:49883"/>
    </cofactor>
    <text evidence="1">Binds 2 [4Fe-4S] clusters per subunit.</text>
</comment>
<comment type="subunit">
    <text>Complex I is composed of at least 49 different subunits. This is a component of the iron-sulfur (IP) fragment of the enzyme.</text>
</comment>
<comment type="subcellular location">
    <subcellularLocation>
        <location evidence="2">Mitochondrion</location>
    </subcellularLocation>
</comment>
<comment type="similarity">
    <text evidence="3">Belongs to the complex I 23 kDa subunit family.</text>
</comment>
<reference key="1">
    <citation type="journal article" date="1997" name="Mol. Gen. Genet.">
        <title>The 28.5-kDa iron-sulfur protein of mitochondrial complex I is encoded in the nucleus in plants.</title>
        <authorList>
            <person name="Schmidt-Bleek K."/>
            <person name="Heiser V."/>
            <person name="Thieck O."/>
            <person name="Brennicke A."/>
            <person name="Grohmann L."/>
        </authorList>
    </citation>
    <scope>NUCLEOTIDE SEQUENCE [MRNA]</scope>
    <source>
        <strain>cv. C24</strain>
    </source>
</reference>
<reference key="2">
    <citation type="journal article" date="2000" name="Nature">
        <title>Sequence and analysis of chromosome 1 of the plant Arabidopsis thaliana.</title>
        <authorList>
            <person name="Theologis A."/>
            <person name="Ecker J.R."/>
            <person name="Palm C.J."/>
            <person name="Federspiel N.A."/>
            <person name="Kaul S."/>
            <person name="White O."/>
            <person name="Alonso J."/>
            <person name="Altafi H."/>
            <person name="Araujo R."/>
            <person name="Bowman C.L."/>
            <person name="Brooks S.Y."/>
            <person name="Buehler E."/>
            <person name="Chan A."/>
            <person name="Chao Q."/>
            <person name="Chen H."/>
            <person name="Cheuk R.F."/>
            <person name="Chin C.W."/>
            <person name="Chung M.K."/>
            <person name="Conn L."/>
            <person name="Conway A.B."/>
            <person name="Conway A.R."/>
            <person name="Creasy T.H."/>
            <person name="Dewar K."/>
            <person name="Dunn P."/>
            <person name="Etgu P."/>
            <person name="Feldblyum T.V."/>
            <person name="Feng J.-D."/>
            <person name="Fong B."/>
            <person name="Fujii C.Y."/>
            <person name="Gill J.E."/>
            <person name="Goldsmith A.D."/>
            <person name="Haas B."/>
            <person name="Hansen N.F."/>
            <person name="Hughes B."/>
            <person name="Huizar L."/>
            <person name="Hunter J.L."/>
            <person name="Jenkins J."/>
            <person name="Johnson-Hopson C."/>
            <person name="Khan S."/>
            <person name="Khaykin E."/>
            <person name="Kim C.J."/>
            <person name="Koo H.L."/>
            <person name="Kremenetskaia I."/>
            <person name="Kurtz D.B."/>
            <person name="Kwan A."/>
            <person name="Lam B."/>
            <person name="Langin-Hooper S."/>
            <person name="Lee A."/>
            <person name="Lee J.M."/>
            <person name="Lenz C.A."/>
            <person name="Li J.H."/>
            <person name="Li Y.-P."/>
            <person name="Lin X."/>
            <person name="Liu S.X."/>
            <person name="Liu Z.A."/>
            <person name="Luros J.S."/>
            <person name="Maiti R."/>
            <person name="Marziali A."/>
            <person name="Militscher J."/>
            <person name="Miranda M."/>
            <person name="Nguyen M."/>
            <person name="Nierman W.C."/>
            <person name="Osborne B.I."/>
            <person name="Pai G."/>
            <person name="Peterson J."/>
            <person name="Pham P.K."/>
            <person name="Rizzo M."/>
            <person name="Rooney T."/>
            <person name="Rowley D."/>
            <person name="Sakano H."/>
            <person name="Salzberg S.L."/>
            <person name="Schwartz J.R."/>
            <person name="Shinn P."/>
            <person name="Southwick A.M."/>
            <person name="Sun H."/>
            <person name="Tallon L.J."/>
            <person name="Tambunga G."/>
            <person name="Toriumi M.J."/>
            <person name="Town C.D."/>
            <person name="Utterback T."/>
            <person name="Van Aken S."/>
            <person name="Vaysberg M."/>
            <person name="Vysotskaia V.S."/>
            <person name="Walker M."/>
            <person name="Wu D."/>
            <person name="Yu G."/>
            <person name="Fraser C.M."/>
            <person name="Venter J.C."/>
            <person name="Davis R.W."/>
        </authorList>
    </citation>
    <scope>NUCLEOTIDE SEQUENCE [LARGE SCALE GENOMIC DNA]</scope>
    <source>
        <strain>cv. Columbia</strain>
    </source>
</reference>
<reference key="3">
    <citation type="journal article" date="2017" name="Plant J.">
        <title>Araport11: a complete reannotation of the Arabidopsis thaliana reference genome.</title>
        <authorList>
            <person name="Cheng C.Y."/>
            <person name="Krishnakumar V."/>
            <person name="Chan A.P."/>
            <person name="Thibaud-Nissen F."/>
            <person name="Schobel S."/>
            <person name="Town C.D."/>
        </authorList>
    </citation>
    <scope>GENOME REANNOTATION</scope>
    <source>
        <strain>cv. Columbia</strain>
    </source>
</reference>
<reference key="4">
    <citation type="journal article" date="2003" name="Science">
        <title>Empirical analysis of transcriptional activity in the Arabidopsis genome.</title>
        <authorList>
            <person name="Yamada K."/>
            <person name="Lim J."/>
            <person name="Dale J.M."/>
            <person name="Chen H."/>
            <person name="Shinn P."/>
            <person name="Palm C.J."/>
            <person name="Southwick A.M."/>
            <person name="Wu H.C."/>
            <person name="Kim C.J."/>
            <person name="Nguyen M."/>
            <person name="Pham P.K."/>
            <person name="Cheuk R.F."/>
            <person name="Karlin-Newmann G."/>
            <person name="Liu S.X."/>
            <person name="Lam B."/>
            <person name="Sakano H."/>
            <person name="Wu T."/>
            <person name="Yu G."/>
            <person name="Miranda M."/>
            <person name="Quach H.L."/>
            <person name="Tripp M."/>
            <person name="Chang C.H."/>
            <person name="Lee J.M."/>
            <person name="Toriumi M.J."/>
            <person name="Chan M.M."/>
            <person name="Tang C.C."/>
            <person name="Onodera C.S."/>
            <person name="Deng J.M."/>
            <person name="Akiyama K."/>
            <person name="Ansari Y."/>
            <person name="Arakawa T."/>
            <person name="Banh J."/>
            <person name="Banno F."/>
            <person name="Bowser L."/>
            <person name="Brooks S.Y."/>
            <person name="Carninci P."/>
            <person name="Chao Q."/>
            <person name="Choy N."/>
            <person name="Enju A."/>
            <person name="Goldsmith A.D."/>
            <person name="Gurjal M."/>
            <person name="Hansen N.F."/>
            <person name="Hayashizaki Y."/>
            <person name="Johnson-Hopson C."/>
            <person name="Hsuan V.W."/>
            <person name="Iida K."/>
            <person name="Karnes M."/>
            <person name="Khan S."/>
            <person name="Koesema E."/>
            <person name="Ishida J."/>
            <person name="Jiang P.X."/>
            <person name="Jones T."/>
            <person name="Kawai J."/>
            <person name="Kamiya A."/>
            <person name="Meyers C."/>
            <person name="Nakajima M."/>
            <person name="Narusaka M."/>
            <person name="Seki M."/>
            <person name="Sakurai T."/>
            <person name="Satou M."/>
            <person name="Tamse R."/>
            <person name="Vaysberg M."/>
            <person name="Wallender E.K."/>
            <person name="Wong C."/>
            <person name="Yamamura Y."/>
            <person name="Yuan S."/>
            <person name="Shinozaki K."/>
            <person name="Davis R.W."/>
            <person name="Theologis A."/>
            <person name="Ecker J.R."/>
        </authorList>
    </citation>
    <scope>NUCLEOTIDE SEQUENCE [LARGE SCALE MRNA]</scope>
    <source>
        <strain>cv. Columbia</strain>
    </source>
</reference>
<reference key="5">
    <citation type="submission" date="2006-07" db="EMBL/GenBank/DDBJ databases">
        <title>Large-scale analysis of RIKEN Arabidopsis full-length (RAFL) cDNAs.</title>
        <authorList>
            <person name="Totoki Y."/>
            <person name="Seki M."/>
            <person name="Ishida J."/>
            <person name="Nakajima M."/>
            <person name="Enju A."/>
            <person name="Kamiya A."/>
            <person name="Narusaka M."/>
            <person name="Shin-i T."/>
            <person name="Nakagawa M."/>
            <person name="Sakamoto N."/>
            <person name="Oishi K."/>
            <person name="Kohara Y."/>
            <person name="Kobayashi M."/>
            <person name="Toyoda A."/>
            <person name="Sakaki Y."/>
            <person name="Sakurai T."/>
            <person name="Iida K."/>
            <person name="Akiyama K."/>
            <person name="Satou M."/>
            <person name="Toyoda T."/>
            <person name="Konagaya A."/>
            <person name="Carninci P."/>
            <person name="Kawai J."/>
            <person name="Hayashizaki Y."/>
            <person name="Shinozaki K."/>
        </authorList>
    </citation>
    <scope>NUCLEOTIDE SEQUENCE [LARGE SCALE MRNA]</scope>
    <source>
        <strain>cv. Columbia</strain>
    </source>
</reference>
<reference key="6">
    <citation type="submission" date="2002-03" db="EMBL/GenBank/DDBJ databases">
        <title>Full-length cDNA from Arabidopsis thaliana.</title>
        <authorList>
            <person name="Brover V.V."/>
            <person name="Troukhan M.E."/>
            <person name="Alexandrov N.A."/>
            <person name="Lu Y.-P."/>
            <person name="Flavell R.B."/>
            <person name="Feldmann K.A."/>
        </authorList>
    </citation>
    <scope>NUCLEOTIDE SEQUENCE [LARGE SCALE MRNA]</scope>
</reference>
<reference key="7">
    <citation type="journal article" date="2004" name="Plant Cell">
        <title>Experimental analysis of the Arabidopsis mitochondrial proteome highlights signaling and regulatory components, provides assessment of targeting prediction programs, and indicates plant-specific mitochondrial proteins.</title>
        <authorList>
            <person name="Heazlewood J.L."/>
            <person name="Tonti-Filippini J.S."/>
            <person name="Gout A.M."/>
            <person name="Day D.A."/>
            <person name="Whelan J."/>
            <person name="Millar A.H."/>
        </authorList>
    </citation>
    <scope>IDENTIFICATION BY MASS SPECTROMETRY</scope>
    <scope>SUBCELLULAR LOCATION [LARGE SCALE ANALYSIS]</scope>
    <source>
        <strain>cv. Landsberg erecta</strain>
    </source>
</reference>
<keyword id="KW-0002">3D-structure</keyword>
<keyword id="KW-0004">4Fe-4S</keyword>
<keyword id="KW-0249">Electron transport</keyword>
<keyword id="KW-0408">Iron</keyword>
<keyword id="KW-0411">Iron-sulfur</keyword>
<keyword id="KW-0479">Metal-binding</keyword>
<keyword id="KW-0496">Mitochondrion</keyword>
<keyword id="KW-0520">NAD</keyword>
<keyword id="KW-0560">Oxidoreductase</keyword>
<keyword id="KW-1185">Reference proteome</keyword>
<keyword id="KW-0677">Repeat</keyword>
<keyword id="KW-0679">Respiratory chain</keyword>
<keyword id="KW-0809">Transit peptide</keyword>
<keyword id="KW-1278">Translocase</keyword>
<keyword id="KW-0813">Transport</keyword>
<keyword id="KW-0830">Ubiquinone</keyword>
<gene>
    <name type="ordered locus">At1g79010</name>
    <name type="ORF">YUP8H12R.37</name>
    <name type="ORF">YUP8H12R_21</name>
</gene>
<protein>
    <recommendedName>
        <fullName>NADH dehydrogenase [ubiquinone] iron-sulfur protein 8-A, mitochondrial</fullName>
        <ecNumber>7.1.1.2</ecNumber>
    </recommendedName>
</protein>
<accession>Q42599</accession>
<accession>Q0WWI2</accession>
<sequence>MASILARRSLNTLRARHLVLSGQALQGSHLSRLQSRGISYGSNKDDEEAEQLSKEISKDWNTVFERSINTLFLTEMVRGLSLTLKYFFDPKVTINYPFEKGPLSPRFRGEHALRRYPTGEERCIACKLCEAVCPAQAITIEAEEREDGSRRTTRYDIDMTKCIYCGFCQEACPVDAIVEGPNFEFATETHEELLYDKEKLLENGDRWETEIAENLRSESLYR</sequence>
<evidence type="ECO:0000250" key="1"/>
<evidence type="ECO:0000269" key="2">
    <source>
    </source>
</evidence>
<evidence type="ECO:0000305" key="3"/>
<evidence type="ECO:0007829" key="4">
    <source>
        <dbReference type="PDB" id="8BEE"/>
    </source>
</evidence>
<name>NDS8A_ARATH</name>